<dbReference type="EMBL" id="AF146743">
    <property type="protein sequence ID" value="AAD39511.1"/>
    <property type="molecule type" value="mRNA"/>
</dbReference>
<dbReference type="EMBL" id="AF543047">
    <property type="protein sequence ID" value="AAQ11421.1"/>
    <property type="molecule type" value="mRNA"/>
</dbReference>
<dbReference type="GO" id="GO:0005576">
    <property type="term" value="C:extracellular region"/>
    <property type="evidence" value="ECO:0007669"/>
    <property type="project" value="UniProtKB-SubCell"/>
</dbReference>
<feature type="signal peptide" evidence="2">
    <location>
        <begin position="1"/>
        <end position="22"/>
    </location>
</feature>
<feature type="chain" id="PRO_0000231494" description="Peptide BmKa1">
    <location>
        <begin position="23"/>
        <end position="57"/>
    </location>
</feature>
<feature type="region of interest" description="Disordered" evidence="3">
    <location>
        <begin position="20"/>
        <end position="57"/>
    </location>
</feature>
<feature type="compositionally biased region" description="Acidic residues" evidence="3">
    <location>
        <begin position="20"/>
        <end position="29"/>
    </location>
</feature>
<feature type="compositionally biased region" description="Acidic residues" evidence="3">
    <location>
        <begin position="45"/>
        <end position="57"/>
    </location>
</feature>
<accession>Q9Y0X5</accession>
<comment type="subcellular location">
    <subcellularLocation>
        <location evidence="1">Secreted</location>
    </subcellularLocation>
</comment>
<comment type="tissue specificity">
    <text evidence="6">Expressed by the venom gland.</text>
</comment>
<comment type="similarity">
    <text evidence="6">Belongs to the non-disulfide-bridged peptide (NDBP) superfamily.</text>
</comment>
<sequence>MKPRVFFLLFLLVAAMIETGESEENEEGSNESGKSTEAKNTDASVDNEDSDIDGDSD</sequence>
<proteinExistence type="inferred from homology"/>
<reference key="1">
    <citation type="journal article" date="2004" name="Peptides">
        <title>Identification and functional characterization of novel scorpion venom peptides with no disulfide bridge from Buthus martensii Karsch.</title>
        <authorList>
            <person name="Zeng X.-C."/>
            <person name="Wang S.-X."/>
            <person name="Zhu Y."/>
            <person name="Zhu S.-Y."/>
            <person name="Li W.-X."/>
        </authorList>
    </citation>
    <scope>NUCLEOTIDE SEQUENCE [MRNA]</scope>
    <source>
        <tissue>Venom gland</tissue>
    </source>
</reference>
<reference key="2">
    <citation type="journal article" date="2005" name="IUBMB Life">
        <title>Scorpion venom peptides without disulfide bridges.</title>
        <authorList>
            <person name="Zeng X.C."/>
            <person name="Corzo G."/>
            <person name="Hahin R."/>
        </authorList>
    </citation>
    <scope>NOMENCLATURE</scope>
</reference>
<keyword id="KW-0964">Secreted</keyword>
<keyword id="KW-0732">Signal</keyword>
<organism>
    <name type="scientific">Olivierus martensii</name>
    <name type="common">Manchurian scorpion</name>
    <name type="synonym">Mesobuthus martensii</name>
    <dbReference type="NCBI Taxonomy" id="34649"/>
    <lineage>
        <taxon>Eukaryota</taxon>
        <taxon>Metazoa</taxon>
        <taxon>Ecdysozoa</taxon>
        <taxon>Arthropoda</taxon>
        <taxon>Chelicerata</taxon>
        <taxon>Arachnida</taxon>
        <taxon>Scorpiones</taxon>
        <taxon>Buthida</taxon>
        <taxon>Buthoidea</taxon>
        <taxon>Buthidae</taxon>
        <taxon>Olivierus</taxon>
    </lineage>
</organism>
<evidence type="ECO:0000250" key="1"/>
<evidence type="ECO:0000255" key="2"/>
<evidence type="ECO:0000256" key="3">
    <source>
        <dbReference type="SAM" id="MobiDB-lite"/>
    </source>
</evidence>
<evidence type="ECO:0000303" key="4">
    <source>
    </source>
</evidence>
<evidence type="ECO:0000303" key="5">
    <source>
    </source>
</evidence>
<evidence type="ECO:0000305" key="6"/>
<name>NDBX_OLIMR</name>
<protein>
    <recommendedName>
        <fullName evidence="4">Peptide BmKa1</fullName>
    </recommendedName>
    <alternativeName>
        <fullName evidence="4">Acidic venom peptide Ka1</fullName>
    </alternativeName>
    <alternativeName>
        <fullName>BmK2</fullName>
    </alternativeName>
    <alternativeName>
        <fullName evidence="5">Non-disulfide-bridged peptide 6.1</fullName>
        <shortName evidence="5">NDBP-6.1</shortName>
    </alternativeName>
</protein>